<reference key="1">
    <citation type="journal article" date="2002" name="Proc. Natl. Acad. Sci. U.S.A.">
        <title>The genome sequence of Bifidobacterium longum reflects its adaptation to the human gastrointestinal tract.</title>
        <authorList>
            <person name="Schell M.A."/>
            <person name="Karmirantzou M."/>
            <person name="Snel B."/>
            <person name="Vilanova D."/>
            <person name="Berger B."/>
            <person name="Pessi G."/>
            <person name="Zwahlen M.-C."/>
            <person name="Desiere F."/>
            <person name="Bork P."/>
            <person name="Delley M."/>
            <person name="Pridmore R.D."/>
            <person name="Arigoni F."/>
        </authorList>
    </citation>
    <scope>NUCLEOTIDE SEQUENCE [LARGE SCALE GENOMIC DNA]</scope>
    <source>
        <strain>NCC 2705</strain>
    </source>
</reference>
<name>RS3_BIFLO</name>
<organism>
    <name type="scientific">Bifidobacterium longum (strain NCC 2705)</name>
    <dbReference type="NCBI Taxonomy" id="206672"/>
    <lineage>
        <taxon>Bacteria</taxon>
        <taxon>Bacillati</taxon>
        <taxon>Actinomycetota</taxon>
        <taxon>Actinomycetes</taxon>
        <taxon>Bifidobacteriales</taxon>
        <taxon>Bifidobacteriaceae</taxon>
        <taxon>Bifidobacterium</taxon>
    </lineage>
</organism>
<gene>
    <name evidence="1" type="primary">rpsC</name>
    <name type="ordered locus">BL1584</name>
</gene>
<protein>
    <recommendedName>
        <fullName evidence="1">Small ribosomal subunit protein uS3</fullName>
    </recommendedName>
    <alternativeName>
        <fullName evidence="3">30S ribosomal protein S3</fullName>
    </alternativeName>
</protein>
<evidence type="ECO:0000255" key="1">
    <source>
        <dbReference type="HAMAP-Rule" id="MF_01309"/>
    </source>
</evidence>
<evidence type="ECO:0000256" key="2">
    <source>
        <dbReference type="SAM" id="MobiDB-lite"/>
    </source>
</evidence>
<evidence type="ECO:0000305" key="3"/>
<comment type="function">
    <text evidence="1">Binds the lower part of the 30S subunit head. Binds mRNA in the 70S ribosome, positioning it for translation.</text>
</comment>
<comment type="subunit">
    <text evidence="1">Part of the 30S ribosomal subunit. Forms a tight complex with proteins S10 and S14.</text>
</comment>
<comment type="similarity">
    <text evidence="1">Belongs to the universal ribosomal protein uS3 family.</text>
</comment>
<proteinExistence type="inferred from homology"/>
<feature type="chain" id="PRO_0000130078" description="Small ribosomal subunit protein uS3">
    <location>
        <begin position="1"/>
        <end position="267"/>
    </location>
</feature>
<feature type="domain" description="KH type-2" evidence="1">
    <location>
        <begin position="43"/>
        <end position="111"/>
    </location>
</feature>
<feature type="region of interest" description="Disordered" evidence="2">
    <location>
        <begin position="216"/>
        <end position="267"/>
    </location>
</feature>
<feature type="compositionally biased region" description="Low complexity" evidence="2">
    <location>
        <begin position="241"/>
        <end position="267"/>
    </location>
</feature>
<keyword id="KW-1185">Reference proteome</keyword>
<keyword id="KW-0687">Ribonucleoprotein</keyword>
<keyword id="KW-0689">Ribosomal protein</keyword>
<keyword id="KW-0694">RNA-binding</keyword>
<keyword id="KW-0699">rRNA-binding</keyword>
<dbReference type="EMBL" id="AE014295">
    <property type="protein sequence ID" value="AAN25375.1"/>
    <property type="molecule type" value="Genomic_DNA"/>
</dbReference>
<dbReference type="RefSeq" id="NP_696739.1">
    <property type="nucleotide sequence ID" value="NC_004307.2"/>
</dbReference>
<dbReference type="RefSeq" id="WP_007053036.1">
    <property type="nucleotide sequence ID" value="NC_004307.2"/>
</dbReference>
<dbReference type="SMR" id="P59179"/>
<dbReference type="STRING" id="206672.BL1584"/>
<dbReference type="EnsemblBacteria" id="AAN25375">
    <property type="protein sequence ID" value="AAN25375"/>
    <property type="gene ID" value="BL1584"/>
</dbReference>
<dbReference type="GeneID" id="69578891"/>
<dbReference type="KEGG" id="blo:BL1584"/>
<dbReference type="PATRIC" id="fig|206672.9.peg.1641"/>
<dbReference type="HOGENOM" id="CLU_058591_0_2_11"/>
<dbReference type="OrthoDB" id="9806396at2"/>
<dbReference type="PhylomeDB" id="P59179"/>
<dbReference type="Proteomes" id="UP000000439">
    <property type="component" value="Chromosome"/>
</dbReference>
<dbReference type="GO" id="GO:0022627">
    <property type="term" value="C:cytosolic small ribosomal subunit"/>
    <property type="evidence" value="ECO:0007669"/>
    <property type="project" value="TreeGrafter"/>
</dbReference>
<dbReference type="GO" id="GO:0003729">
    <property type="term" value="F:mRNA binding"/>
    <property type="evidence" value="ECO:0007669"/>
    <property type="project" value="UniProtKB-UniRule"/>
</dbReference>
<dbReference type="GO" id="GO:0019843">
    <property type="term" value="F:rRNA binding"/>
    <property type="evidence" value="ECO:0007669"/>
    <property type="project" value="UniProtKB-UniRule"/>
</dbReference>
<dbReference type="GO" id="GO:0003735">
    <property type="term" value="F:structural constituent of ribosome"/>
    <property type="evidence" value="ECO:0007669"/>
    <property type="project" value="InterPro"/>
</dbReference>
<dbReference type="GO" id="GO:0006412">
    <property type="term" value="P:translation"/>
    <property type="evidence" value="ECO:0007669"/>
    <property type="project" value="UniProtKB-UniRule"/>
</dbReference>
<dbReference type="CDD" id="cd02412">
    <property type="entry name" value="KH-II_30S_S3"/>
    <property type="match status" value="1"/>
</dbReference>
<dbReference type="FunFam" id="3.30.1140.32:FF:000002">
    <property type="entry name" value="30S ribosomal protein S3"/>
    <property type="match status" value="1"/>
</dbReference>
<dbReference type="FunFam" id="3.30.300.20:FF:000001">
    <property type="entry name" value="30S ribosomal protein S3"/>
    <property type="match status" value="1"/>
</dbReference>
<dbReference type="Gene3D" id="3.30.300.20">
    <property type="match status" value="1"/>
</dbReference>
<dbReference type="Gene3D" id="3.30.1140.32">
    <property type="entry name" value="Ribosomal protein S3, C-terminal domain"/>
    <property type="match status" value="1"/>
</dbReference>
<dbReference type="HAMAP" id="MF_01309_B">
    <property type="entry name" value="Ribosomal_uS3_B"/>
    <property type="match status" value="1"/>
</dbReference>
<dbReference type="InterPro" id="IPR004087">
    <property type="entry name" value="KH_dom"/>
</dbReference>
<dbReference type="InterPro" id="IPR015946">
    <property type="entry name" value="KH_dom-like_a/b"/>
</dbReference>
<dbReference type="InterPro" id="IPR004044">
    <property type="entry name" value="KH_dom_type_2"/>
</dbReference>
<dbReference type="InterPro" id="IPR009019">
    <property type="entry name" value="KH_sf_prok-type"/>
</dbReference>
<dbReference type="InterPro" id="IPR036419">
    <property type="entry name" value="Ribosomal_S3_C_sf"/>
</dbReference>
<dbReference type="InterPro" id="IPR005704">
    <property type="entry name" value="Ribosomal_uS3_bac-typ"/>
</dbReference>
<dbReference type="InterPro" id="IPR001351">
    <property type="entry name" value="Ribosomal_uS3_C"/>
</dbReference>
<dbReference type="InterPro" id="IPR018280">
    <property type="entry name" value="Ribosomal_uS3_CS"/>
</dbReference>
<dbReference type="NCBIfam" id="TIGR01009">
    <property type="entry name" value="rpsC_bact"/>
    <property type="match status" value="1"/>
</dbReference>
<dbReference type="PANTHER" id="PTHR11760">
    <property type="entry name" value="30S/40S RIBOSOMAL PROTEIN S3"/>
    <property type="match status" value="1"/>
</dbReference>
<dbReference type="PANTHER" id="PTHR11760:SF19">
    <property type="entry name" value="SMALL RIBOSOMAL SUBUNIT PROTEIN US3C"/>
    <property type="match status" value="1"/>
</dbReference>
<dbReference type="Pfam" id="PF07650">
    <property type="entry name" value="KH_2"/>
    <property type="match status" value="1"/>
</dbReference>
<dbReference type="Pfam" id="PF00189">
    <property type="entry name" value="Ribosomal_S3_C"/>
    <property type="match status" value="1"/>
</dbReference>
<dbReference type="SMART" id="SM00322">
    <property type="entry name" value="KH"/>
    <property type="match status" value="1"/>
</dbReference>
<dbReference type="SUPFAM" id="SSF54814">
    <property type="entry name" value="Prokaryotic type KH domain (KH-domain type II)"/>
    <property type="match status" value="1"/>
</dbReference>
<dbReference type="SUPFAM" id="SSF54821">
    <property type="entry name" value="Ribosomal protein S3 C-terminal domain"/>
    <property type="match status" value="1"/>
</dbReference>
<dbReference type="PROSITE" id="PS50823">
    <property type="entry name" value="KH_TYPE_2"/>
    <property type="match status" value="1"/>
</dbReference>
<dbReference type="PROSITE" id="PS00548">
    <property type="entry name" value="RIBOSOMAL_S3"/>
    <property type="match status" value="1"/>
</dbReference>
<sequence>MGQKINPFGYRLGITENHRSKWFSDSNKAGERYRDFVLEDDQIRKEMSKDLERAGVSRIVIERTRDRVRVDIHTARPGIVIGRRGAEAERVRAKLEKLTGKQVQLNIFEVKNAALDAQLVAQGIAEQLTNRVTFRRAMRKAQQDAMRAGAKGIRIKLSGRLGGAEMSRSEFYREGRVPLQTLRALIDYGFFEAKTTYGRIGVKVWIYKGDMTESEFEEQQAQQNNRPGRRGGDRRPRRGNRSAAPQAAEAPKAEAPAEAAPAAETKE</sequence>
<accession>P59179</accession>